<name>HBB_PIG</name>
<reference key="1">
    <citation type="submission" date="1995-05" db="EMBL/GenBank/DDBJ databases">
        <title>Molecular characterization of porcine beta globin locus.</title>
        <authorList>
            <person name="Sharma A."/>
            <person name="Parson C.T."/>
            <person name="Midha S."/>
            <person name="Okabe J."/>
            <person name="Yerle M."/>
            <person name="Pinton P."/>
            <person name="Logan J."/>
            <person name="Kumar L.R."/>
        </authorList>
    </citation>
    <scope>NUCLEOTIDE SEQUENCE [GENOMIC DNA]</scope>
</reference>
<reference key="2">
    <citation type="journal article" date="1978" name="Hoppe-Seyler's Z. Physiol. Chem.">
        <title>Hemoglobins, XXI. Sequence analysis of porcine hemoglobin.</title>
        <authorList>
            <person name="Braunitzer G."/>
            <person name="Schrank B."/>
            <person name="Stangl A."/>
            <person name="Scheithauer U."/>
        </authorList>
    </citation>
    <scope>PROTEIN SEQUENCE OF 2-147</scope>
</reference>
<reference key="3">
    <citation type="journal article" date="1994" name="J. Mol. Biol.">
        <title>Structure determination of aquomet porcine hemoglobin at 2.8-A resolution.</title>
        <authorList>
            <person name="Katz D.S."/>
            <person name="White S.P."/>
            <person name="Huang W."/>
            <person name="Kumar R."/>
            <person name="Christianson D.W."/>
        </authorList>
    </citation>
    <scope>X-RAY CRYSTALLOGRAPHY (2.80 ANGSTROMS) OF 2-147 IN COMPLEX WITH HEME</scope>
</reference>
<reference key="4">
    <citation type="journal article" date="2000" name="Acta Crystallogr. D">
        <title>Structure determination of porcine haemoglobin.</title>
        <authorList>
            <person name="Lu T.-H."/>
            <person name="Panneerselvam K."/>
            <person name="Liaw Y.-C."/>
            <person name="Kan P."/>
            <person name="Lee C.-J."/>
        </authorList>
    </citation>
    <scope>X-RAY CRYSTALLOGRAPHY (1.80 ANGSTROMS) OF 2-147 IN COMPLEX WITH HEME</scope>
</reference>
<proteinExistence type="evidence at protein level"/>
<protein>
    <recommendedName>
        <fullName>Hemoglobin subunit beta</fullName>
    </recommendedName>
    <alternativeName>
        <fullName>Beta-globin</fullName>
    </alternativeName>
    <alternativeName>
        <fullName>Hemoglobin beta chain</fullName>
    </alternativeName>
</protein>
<gene>
    <name type="primary">HBB</name>
</gene>
<organism>
    <name type="scientific">Sus scrofa</name>
    <name type="common">Pig</name>
    <dbReference type="NCBI Taxonomy" id="9823"/>
    <lineage>
        <taxon>Eukaryota</taxon>
        <taxon>Metazoa</taxon>
        <taxon>Chordata</taxon>
        <taxon>Craniata</taxon>
        <taxon>Vertebrata</taxon>
        <taxon>Euteleostomi</taxon>
        <taxon>Mammalia</taxon>
        <taxon>Eutheria</taxon>
        <taxon>Laurasiatheria</taxon>
        <taxon>Artiodactyla</taxon>
        <taxon>Suina</taxon>
        <taxon>Suidae</taxon>
        <taxon>Sus</taxon>
    </lineage>
</organism>
<accession>P02067</accession>
<accession>Q29025</accession>
<comment type="function">
    <text>Involved in oxygen transport from the lung to the various peripheral tissues.</text>
</comment>
<comment type="subunit">
    <text>Heterotetramer of two alpha chains and two beta chains.</text>
</comment>
<comment type="interaction">
    <interactant intactId="EBI-9014782">
        <id>P02067</id>
    </interactant>
    <interactant intactId="EBI-12557210">
        <id>Q5U8X5</id>
    </interactant>
    <organismsDiffer>true</organismsDiffer>
    <experiments>6</experiments>
</comment>
<comment type="tissue specificity">
    <text>Red blood cells.</text>
</comment>
<comment type="similarity">
    <text evidence="4">Belongs to the globin family.</text>
</comment>
<feature type="initiator methionine" description="Removed" evidence="1 6">
    <location>
        <position position="1"/>
    </location>
</feature>
<feature type="chain" id="PRO_0000053071" description="Hemoglobin subunit beta">
    <location>
        <begin position="2"/>
        <end position="147"/>
    </location>
</feature>
<feature type="domain" description="Globin" evidence="4">
    <location>
        <begin position="3"/>
        <end position="147"/>
    </location>
</feature>
<feature type="binding site" description="distal binding residue" evidence="3">
    <location>
        <position position="64"/>
    </location>
    <ligand>
        <name>heme b</name>
        <dbReference type="ChEBI" id="CHEBI:60344"/>
    </ligand>
    <ligandPart>
        <name>Fe</name>
        <dbReference type="ChEBI" id="CHEBI:18248"/>
    </ligandPart>
</feature>
<feature type="binding site" description="proximal binding residue" evidence="4 5 7 9 10 11">
    <location>
        <position position="93"/>
    </location>
    <ligand>
        <name>heme b</name>
        <dbReference type="ChEBI" id="CHEBI:60344"/>
    </ligand>
    <ligandPart>
        <name>Fe</name>
        <dbReference type="ChEBI" id="CHEBI:18248"/>
    </ligandPart>
</feature>
<feature type="modified residue" description="N-acetylvaline" evidence="1">
    <location>
        <position position="2"/>
    </location>
</feature>
<feature type="modified residue" description="Phosphoserine" evidence="2">
    <location>
        <position position="45"/>
    </location>
</feature>
<feature type="modified residue" description="N6-acetyllysine" evidence="2">
    <location>
        <position position="60"/>
    </location>
</feature>
<feature type="modified residue" description="N6-acetyllysine" evidence="2">
    <location>
        <position position="83"/>
    </location>
</feature>
<feature type="modified residue" description="S-nitrosocysteine" evidence="2">
    <location>
        <position position="94"/>
    </location>
</feature>
<feature type="modified residue" description="N6-acetyllysine" evidence="2">
    <location>
        <position position="145"/>
    </location>
</feature>
<feature type="sequence conflict" description="In Ref. 2; AA sequence." evidence="8" ref="2">
    <original>N</original>
    <variation>D</variation>
    <location>
        <position position="126"/>
    </location>
</feature>
<feature type="helix" evidence="12">
    <location>
        <begin position="6"/>
        <end position="16"/>
    </location>
</feature>
<feature type="helix" evidence="12">
    <location>
        <begin position="21"/>
        <end position="35"/>
    </location>
</feature>
<feature type="helix" evidence="12">
    <location>
        <begin position="37"/>
        <end position="46"/>
    </location>
</feature>
<feature type="helix" evidence="12">
    <location>
        <begin position="52"/>
        <end position="55"/>
    </location>
</feature>
<feature type="helix" evidence="12">
    <location>
        <begin position="59"/>
        <end position="75"/>
    </location>
</feature>
<feature type="helix" evidence="12">
    <location>
        <begin position="79"/>
        <end position="81"/>
    </location>
</feature>
<feature type="helix" evidence="12">
    <location>
        <begin position="82"/>
        <end position="95"/>
    </location>
</feature>
<feature type="helix" evidence="12">
    <location>
        <begin position="102"/>
        <end position="119"/>
    </location>
</feature>
<feature type="helix" evidence="12">
    <location>
        <begin position="120"/>
        <end position="122"/>
    </location>
</feature>
<feature type="helix" evidence="12">
    <location>
        <begin position="125"/>
        <end position="142"/>
    </location>
</feature>
<feature type="turn" evidence="12">
    <location>
        <begin position="143"/>
        <end position="145"/>
    </location>
</feature>
<evidence type="ECO:0000250" key="1">
    <source>
        <dbReference type="UniProtKB" id="P02086"/>
    </source>
</evidence>
<evidence type="ECO:0000250" key="2">
    <source>
        <dbReference type="UniProtKB" id="P68871"/>
    </source>
</evidence>
<evidence type="ECO:0000250" key="3">
    <source>
        <dbReference type="UniProtKB" id="P80044"/>
    </source>
</evidence>
<evidence type="ECO:0000255" key="4">
    <source>
        <dbReference type="PROSITE-ProRule" id="PRU00238"/>
    </source>
</evidence>
<evidence type="ECO:0000269" key="5">
    <source>
    </source>
</evidence>
<evidence type="ECO:0000269" key="6">
    <source>
    </source>
</evidence>
<evidence type="ECO:0000269" key="7">
    <source>
    </source>
</evidence>
<evidence type="ECO:0000305" key="8"/>
<evidence type="ECO:0007744" key="9">
    <source>
        <dbReference type="PDB" id="1QPW"/>
    </source>
</evidence>
<evidence type="ECO:0007744" key="10">
    <source>
        <dbReference type="PDB" id="2PGH"/>
    </source>
</evidence>
<evidence type="ECO:0007744" key="11">
    <source>
        <dbReference type="PDB" id="4F4O"/>
    </source>
</evidence>
<evidence type="ECO:0007829" key="12">
    <source>
        <dbReference type="PDB" id="1QPW"/>
    </source>
</evidence>
<dbReference type="EMBL" id="X86791">
    <property type="protein sequence ID" value="CAA60490.1"/>
    <property type="molecule type" value="Genomic_DNA"/>
</dbReference>
<dbReference type="PIR" id="S54269">
    <property type="entry name" value="HBPG"/>
</dbReference>
<dbReference type="RefSeq" id="NP_001138313.1">
    <property type="nucleotide sequence ID" value="NM_001144841.1"/>
</dbReference>
<dbReference type="PDB" id="1QPW">
    <property type="method" value="X-ray"/>
    <property type="resolution" value="1.80 A"/>
    <property type="chains" value="B/D=2-147"/>
</dbReference>
<dbReference type="PDB" id="2PGH">
    <property type="method" value="X-ray"/>
    <property type="resolution" value="2.80 A"/>
    <property type="chains" value="B/D=2-147"/>
</dbReference>
<dbReference type="PDB" id="4F4O">
    <property type="method" value="X-ray"/>
    <property type="resolution" value="2.90 A"/>
    <property type="chains" value="B/E/H/K=2-147"/>
</dbReference>
<dbReference type="PDBsum" id="1QPW"/>
<dbReference type="PDBsum" id="2PGH"/>
<dbReference type="PDBsum" id="4F4O"/>
<dbReference type="SMR" id="P02067"/>
<dbReference type="DIP" id="DIP-59910N"/>
<dbReference type="FunCoup" id="P02067">
    <property type="interactions" value="640"/>
</dbReference>
<dbReference type="IntAct" id="P02067">
    <property type="interactions" value="2"/>
</dbReference>
<dbReference type="STRING" id="9823.ENSSSCP00000067521"/>
<dbReference type="ChEMBL" id="CHEMBL4006"/>
<dbReference type="PaxDb" id="9823-ENSSSCP00000015647"/>
<dbReference type="PeptideAtlas" id="P02067"/>
<dbReference type="GeneID" id="407066"/>
<dbReference type="KEGG" id="ssc:407066"/>
<dbReference type="CTD" id="3043"/>
<dbReference type="eggNOG" id="KOG3378">
    <property type="taxonomic scope" value="Eukaryota"/>
</dbReference>
<dbReference type="InParanoid" id="P02067"/>
<dbReference type="OrthoDB" id="9886081at2759"/>
<dbReference type="EvolutionaryTrace" id="P02067"/>
<dbReference type="Proteomes" id="UP000008227">
    <property type="component" value="Unplaced"/>
</dbReference>
<dbReference type="Proteomes" id="UP000314985">
    <property type="component" value="Unplaced"/>
</dbReference>
<dbReference type="Proteomes" id="UP000694570">
    <property type="component" value="Unplaced"/>
</dbReference>
<dbReference type="Proteomes" id="UP000694571">
    <property type="component" value="Unplaced"/>
</dbReference>
<dbReference type="Proteomes" id="UP000694720">
    <property type="component" value="Unplaced"/>
</dbReference>
<dbReference type="Proteomes" id="UP000694722">
    <property type="component" value="Unplaced"/>
</dbReference>
<dbReference type="Proteomes" id="UP000694723">
    <property type="component" value="Unplaced"/>
</dbReference>
<dbReference type="Proteomes" id="UP000694724">
    <property type="component" value="Unplaced"/>
</dbReference>
<dbReference type="Proteomes" id="UP000694725">
    <property type="component" value="Unplaced"/>
</dbReference>
<dbReference type="Proteomes" id="UP000694726">
    <property type="component" value="Unplaced"/>
</dbReference>
<dbReference type="Proteomes" id="UP000694727">
    <property type="component" value="Unplaced"/>
</dbReference>
<dbReference type="Proteomes" id="UP000694728">
    <property type="component" value="Unplaced"/>
</dbReference>
<dbReference type="GO" id="GO:0031838">
    <property type="term" value="C:haptoglobin-hemoglobin complex"/>
    <property type="evidence" value="ECO:0000318"/>
    <property type="project" value="GO_Central"/>
</dbReference>
<dbReference type="GO" id="GO:0005833">
    <property type="term" value="C:hemoglobin complex"/>
    <property type="evidence" value="ECO:0000318"/>
    <property type="project" value="GO_Central"/>
</dbReference>
<dbReference type="GO" id="GO:0020037">
    <property type="term" value="F:heme binding"/>
    <property type="evidence" value="ECO:0000318"/>
    <property type="project" value="GO_Central"/>
</dbReference>
<dbReference type="GO" id="GO:0031721">
    <property type="term" value="F:hemoglobin alpha binding"/>
    <property type="evidence" value="ECO:0000318"/>
    <property type="project" value="GO_Central"/>
</dbReference>
<dbReference type="GO" id="GO:0046872">
    <property type="term" value="F:metal ion binding"/>
    <property type="evidence" value="ECO:0007669"/>
    <property type="project" value="UniProtKB-KW"/>
</dbReference>
<dbReference type="GO" id="GO:0019825">
    <property type="term" value="F:oxygen binding"/>
    <property type="evidence" value="ECO:0000318"/>
    <property type="project" value="GO_Central"/>
</dbReference>
<dbReference type="GO" id="GO:0005344">
    <property type="term" value="F:oxygen carrier activity"/>
    <property type="evidence" value="ECO:0000318"/>
    <property type="project" value="GO_Central"/>
</dbReference>
<dbReference type="GO" id="GO:0098869">
    <property type="term" value="P:cellular oxidant detoxification"/>
    <property type="evidence" value="ECO:0007669"/>
    <property type="project" value="GOC"/>
</dbReference>
<dbReference type="GO" id="GO:0042744">
    <property type="term" value="P:hydrogen peroxide catabolic process"/>
    <property type="evidence" value="ECO:0000318"/>
    <property type="project" value="GO_Central"/>
</dbReference>
<dbReference type="CDD" id="cd08925">
    <property type="entry name" value="Hb-beta-like"/>
    <property type="match status" value="1"/>
</dbReference>
<dbReference type="FunFam" id="1.10.490.10:FF:000001">
    <property type="entry name" value="Hemoglobin subunit beta"/>
    <property type="match status" value="1"/>
</dbReference>
<dbReference type="Gene3D" id="1.10.490.10">
    <property type="entry name" value="Globins"/>
    <property type="match status" value="1"/>
</dbReference>
<dbReference type="InterPro" id="IPR000971">
    <property type="entry name" value="Globin"/>
</dbReference>
<dbReference type="InterPro" id="IPR009050">
    <property type="entry name" value="Globin-like_sf"/>
</dbReference>
<dbReference type="InterPro" id="IPR012292">
    <property type="entry name" value="Globin/Proto"/>
</dbReference>
<dbReference type="InterPro" id="IPR002337">
    <property type="entry name" value="Hemoglobin_b"/>
</dbReference>
<dbReference type="InterPro" id="IPR050056">
    <property type="entry name" value="Hemoglobin_oxygen_transport"/>
</dbReference>
<dbReference type="PANTHER" id="PTHR11442">
    <property type="entry name" value="HEMOGLOBIN FAMILY MEMBER"/>
    <property type="match status" value="1"/>
</dbReference>
<dbReference type="PANTHER" id="PTHR11442:SF42">
    <property type="entry name" value="HEMOGLOBIN SUBUNIT BETA"/>
    <property type="match status" value="1"/>
</dbReference>
<dbReference type="Pfam" id="PF00042">
    <property type="entry name" value="Globin"/>
    <property type="match status" value="1"/>
</dbReference>
<dbReference type="PRINTS" id="PR00814">
    <property type="entry name" value="BETAHAEM"/>
</dbReference>
<dbReference type="SUPFAM" id="SSF46458">
    <property type="entry name" value="Globin-like"/>
    <property type="match status" value="1"/>
</dbReference>
<dbReference type="PROSITE" id="PS01033">
    <property type="entry name" value="GLOBIN"/>
    <property type="match status" value="1"/>
</dbReference>
<sequence length="147" mass="16166">MVHLSAEEKEAVLGLWGKVNVDEVGGEALGRLLVVYPWTQRFFESFGDLSNADAVMGNPKVKAHGKKVLQSFSDGLKHLDNLKGTFAKLSELHCDQLHVDPENFRLLGNVIVVVLARRLGHDFNPNVQAAFQKVVAGVANALAHKYH</sequence>
<keyword id="KW-0002">3D-structure</keyword>
<keyword id="KW-0007">Acetylation</keyword>
<keyword id="KW-0903">Direct protein sequencing</keyword>
<keyword id="KW-0349">Heme</keyword>
<keyword id="KW-0408">Iron</keyword>
<keyword id="KW-0479">Metal-binding</keyword>
<keyword id="KW-0561">Oxygen transport</keyword>
<keyword id="KW-0597">Phosphoprotein</keyword>
<keyword id="KW-1185">Reference proteome</keyword>
<keyword id="KW-0702">S-nitrosylation</keyword>
<keyword id="KW-0813">Transport</keyword>